<reference key="1">
    <citation type="journal article" date="1998" name="DNA Res.">
        <title>Sequence analysis of the Bacillus subtilis 168 chromosome region between the sspC and odhA loci (184 degrees-180 degrees).</title>
        <authorList>
            <person name="Ghim S.-Y."/>
            <person name="Choi S.-K."/>
            <person name="Shin B.-S."/>
            <person name="Jeong Y.-M."/>
            <person name="Sorokin A."/>
            <person name="Ehrlich S.D."/>
            <person name="Park S.-H."/>
        </authorList>
    </citation>
    <scope>NUCLEOTIDE SEQUENCE [GENOMIC DNA]</scope>
    <source>
        <strain>168</strain>
    </source>
</reference>
<reference key="2">
    <citation type="journal article" date="1997" name="Nature">
        <title>The complete genome sequence of the Gram-positive bacterium Bacillus subtilis.</title>
        <authorList>
            <person name="Kunst F."/>
            <person name="Ogasawara N."/>
            <person name="Moszer I."/>
            <person name="Albertini A.M."/>
            <person name="Alloni G."/>
            <person name="Azevedo V."/>
            <person name="Bertero M.G."/>
            <person name="Bessieres P."/>
            <person name="Bolotin A."/>
            <person name="Borchert S."/>
            <person name="Borriss R."/>
            <person name="Boursier L."/>
            <person name="Brans A."/>
            <person name="Braun M."/>
            <person name="Brignell S.C."/>
            <person name="Bron S."/>
            <person name="Brouillet S."/>
            <person name="Bruschi C.V."/>
            <person name="Caldwell B."/>
            <person name="Capuano V."/>
            <person name="Carter N.M."/>
            <person name="Choi S.-K."/>
            <person name="Codani J.-J."/>
            <person name="Connerton I.F."/>
            <person name="Cummings N.J."/>
            <person name="Daniel R.A."/>
            <person name="Denizot F."/>
            <person name="Devine K.M."/>
            <person name="Duesterhoeft A."/>
            <person name="Ehrlich S.D."/>
            <person name="Emmerson P.T."/>
            <person name="Entian K.-D."/>
            <person name="Errington J."/>
            <person name="Fabret C."/>
            <person name="Ferrari E."/>
            <person name="Foulger D."/>
            <person name="Fritz C."/>
            <person name="Fujita M."/>
            <person name="Fujita Y."/>
            <person name="Fuma S."/>
            <person name="Galizzi A."/>
            <person name="Galleron N."/>
            <person name="Ghim S.-Y."/>
            <person name="Glaser P."/>
            <person name="Goffeau A."/>
            <person name="Golightly E.J."/>
            <person name="Grandi G."/>
            <person name="Guiseppi G."/>
            <person name="Guy B.J."/>
            <person name="Haga K."/>
            <person name="Haiech J."/>
            <person name="Harwood C.R."/>
            <person name="Henaut A."/>
            <person name="Hilbert H."/>
            <person name="Holsappel S."/>
            <person name="Hosono S."/>
            <person name="Hullo M.-F."/>
            <person name="Itaya M."/>
            <person name="Jones L.-M."/>
            <person name="Joris B."/>
            <person name="Karamata D."/>
            <person name="Kasahara Y."/>
            <person name="Klaerr-Blanchard M."/>
            <person name="Klein C."/>
            <person name="Kobayashi Y."/>
            <person name="Koetter P."/>
            <person name="Koningstein G."/>
            <person name="Krogh S."/>
            <person name="Kumano M."/>
            <person name="Kurita K."/>
            <person name="Lapidus A."/>
            <person name="Lardinois S."/>
            <person name="Lauber J."/>
            <person name="Lazarevic V."/>
            <person name="Lee S.-M."/>
            <person name="Levine A."/>
            <person name="Liu H."/>
            <person name="Masuda S."/>
            <person name="Mauel C."/>
            <person name="Medigue C."/>
            <person name="Medina N."/>
            <person name="Mellado R.P."/>
            <person name="Mizuno M."/>
            <person name="Moestl D."/>
            <person name="Nakai S."/>
            <person name="Noback M."/>
            <person name="Noone D."/>
            <person name="O'Reilly M."/>
            <person name="Ogawa K."/>
            <person name="Ogiwara A."/>
            <person name="Oudega B."/>
            <person name="Park S.-H."/>
            <person name="Parro V."/>
            <person name="Pohl T.M."/>
            <person name="Portetelle D."/>
            <person name="Porwollik S."/>
            <person name="Prescott A.M."/>
            <person name="Presecan E."/>
            <person name="Pujic P."/>
            <person name="Purnelle B."/>
            <person name="Rapoport G."/>
            <person name="Rey M."/>
            <person name="Reynolds S."/>
            <person name="Rieger M."/>
            <person name="Rivolta C."/>
            <person name="Rocha E."/>
            <person name="Roche B."/>
            <person name="Rose M."/>
            <person name="Sadaie Y."/>
            <person name="Sato T."/>
            <person name="Scanlan E."/>
            <person name="Schleich S."/>
            <person name="Schroeter R."/>
            <person name="Scoffone F."/>
            <person name="Sekiguchi J."/>
            <person name="Sekowska A."/>
            <person name="Seror S.J."/>
            <person name="Serror P."/>
            <person name="Shin B.-S."/>
            <person name="Soldo B."/>
            <person name="Sorokin A."/>
            <person name="Tacconi E."/>
            <person name="Takagi T."/>
            <person name="Takahashi H."/>
            <person name="Takemaru K."/>
            <person name="Takeuchi M."/>
            <person name="Tamakoshi A."/>
            <person name="Tanaka T."/>
            <person name="Terpstra P."/>
            <person name="Tognoni A."/>
            <person name="Tosato V."/>
            <person name="Uchiyama S."/>
            <person name="Vandenbol M."/>
            <person name="Vannier F."/>
            <person name="Vassarotti A."/>
            <person name="Viari A."/>
            <person name="Wambutt R."/>
            <person name="Wedler E."/>
            <person name="Wedler H."/>
            <person name="Weitzenegger T."/>
            <person name="Winters P."/>
            <person name="Wipat A."/>
            <person name="Yamamoto H."/>
            <person name="Yamane K."/>
            <person name="Yasumoto K."/>
            <person name="Yata K."/>
            <person name="Yoshida K."/>
            <person name="Yoshikawa H.-F."/>
            <person name="Zumstein E."/>
            <person name="Yoshikawa H."/>
            <person name="Danchin A."/>
        </authorList>
    </citation>
    <scope>NUCLEOTIDE SEQUENCE [LARGE SCALE GENOMIC DNA]</scope>
    <source>
        <strain>168</strain>
    </source>
</reference>
<sequence length="233" mass="25378">MSVHIGAEKGQIADTVLLPGDPLRAKFIAETYLENVECYNEVRGMYGFTGTYKGKKISVQGTGMGVPSISIYVNELIQSYDVQNLIRVGSCGAIRKDVKVRDVILAMTSSTDSQMNRVAFGSVDFAPCADFELLKNAYDAAKDKGVPVTVGSVFTADQFYNDDSQIEKLAKYGVLGVEMETTALYTLAAKHGRKALSILTVSDHVLTGEETTAEERQTTFHDMIEVALHSVSQ</sequence>
<dbReference type="EC" id="2.4.2.1" evidence="2"/>
<dbReference type="EMBL" id="AF015775">
    <property type="protein sequence ID" value="AAB72065.1"/>
    <property type="molecule type" value="Genomic_DNA"/>
</dbReference>
<dbReference type="EMBL" id="AF006665">
    <property type="protein sequence ID" value="AAB81164.1"/>
    <property type="molecule type" value="Genomic_DNA"/>
</dbReference>
<dbReference type="EMBL" id="AL009126">
    <property type="protein sequence ID" value="CAB13854.1"/>
    <property type="molecule type" value="Genomic_DNA"/>
</dbReference>
<dbReference type="PIR" id="D69614">
    <property type="entry name" value="D69614"/>
</dbReference>
<dbReference type="RefSeq" id="NP_389844.1">
    <property type="nucleotide sequence ID" value="NC_000964.3"/>
</dbReference>
<dbReference type="RefSeq" id="WP_003231176.1">
    <property type="nucleotide sequence ID" value="NZ_OZ025638.1"/>
</dbReference>
<dbReference type="PDB" id="4D8V">
    <property type="method" value="X-ray"/>
    <property type="resolution" value="2.35 A"/>
    <property type="chains" value="A/B=1-233"/>
</dbReference>
<dbReference type="PDB" id="4D8X">
    <property type="method" value="X-ray"/>
    <property type="resolution" value="2.65 A"/>
    <property type="chains" value="A=1-233"/>
</dbReference>
<dbReference type="PDB" id="4D8Y">
    <property type="method" value="X-ray"/>
    <property type="resolution" value="1.61 A"/>
    <property type="chains" value="A/B/C/D/E/F=1-233"/>
</dbReference>
<dbReference type="PDB" id="4D98">
    <property type="method" value="X-ray"/>
    <property type="resolution" value="1.70 A"/>
    <property type="chains" value="A/B=1-233"/>
</dbReference>
<dbReference type="PDB" id="4D9H">
    <property type="method" value="X-ray"/>
    <property type="resolution" value="1.91 A"/>
    <property type="chains" value="A/B=1-233"/>
</dbReference>
<dbReference type="PDB" id="4DA0">
    <property type="method" value="X-ray"/>
    <property type="resolution" value="2.95 A"/>
    <property type="chains" value="A=1-233"/>
</dbReference>
<dbReference type="PDB" id="4DA6">
    <property type="method" value="X-ray"/>
    <property type="resolution" value="1.70 A"/>
    <property type="chains" value="A=1-233"/>
</dbReference>
<dbReference type="PDB" id="4DA7">
    <property type="method" value="X-ray"/>
    <property type="resolution" value="2.05 A"/>
    <property type="chains" value="A=1-233"/>
</dbReference>
<dbReference type="PDB" id="4DA8">
    <property type="method" value="X-ray"/>
    <property type="resolution" value="2.60 A"/>
    <property type="chains" value="A=1-233"/>
</dbReference>
<dbReference type="PDB" id="4DAB">
    <property type="method" value="X-ray"/>
    <property type="resolution" value="1.85 A"/>
    <property type="chains" value="A=1-233"/>
</dbReference>
<dbReference type="PDB" id="4DAE">
    <property type="method" value="X-ray"/>
    <property type="resolution" value="2.35 A"/>
    <property type="chains" value="A=1-233"/>
</dbReference>
<dbReference type="PDB" id="4DAN">
    <property type="method" value="X-ray"/>
    <property type="resolution" value="2.56 A"/>
    <property type="chains" value="A/B=1-233"/>
</dbReference>
<dbReference type="PDB" id="4DAO">
    <property type="method" value="X-ray"/>
    <property type="resolution" value="2.22 A"/>
    <property type="chains" value="A/B=1-233"/>
</dbReference>
<dbReference type="PDB" id="4DAR">
    <property type="method" value="X-ray"/>
    <property type="resolution" value="3.15 A"/>
    <property type="chains" value="A=1-233"/>
</dbReference>
<dbReference type="PDBsum" id="4D8V"/>
<dbReference type="PDBsum" id="4D8X"/>
<dbReference type="PDBsum" id="4D8Y"/>
<dbReference type="PDBsum" id="4D98"/>
<dbReference type="PDBsum" id="4D9H"/>
<dbReference type="PDBsum" id="4DA0"/>
<dbReference type="PDBsum" id="4DA6"/>
<dbReference type="PDBsum" id="4DA7"/>
<dbReference type="PDBsum" id="4DA8"/>
<dbReference type="PDBsum" id="4DAB"/>
<dbReference type="PDBsum" id="4DAE"/>
<dbReference type="PDBsum" id="4DAN"/>
<dbReference type="PDBsum" id="4DAO"/>
<dbReference type="PDBsum" id="4DAR"/>
<dbReference type="SMR" id="O34925"/>
<dbReference type="FunCoup" id="O34925">
    <property type="interactions" value="281"/>
</dbReference>
<dbReference type="IntAct" id="O34925">
    <property type="interactions" value="1"/>
</dbReference>
<dbReference type="MINT" id="O34925"/>
<dbReference type="STRING" id="224308.BSU19630"/>
<dbReference type="jPOST" id="O34925"/>
<dbReference type="PaxDb" id="224308-BSU19630"/>
<dbReference type="EnsemblBacteria" id="CAB13854">
    <property type="protein sequence ID" value="CAB13854"/>
    <property type="gene ID" value="BSU_19630"/>
</dbReference>
<dbReference type="GeneID" id="940038"/>
<dbReference type="KEGG" id="bsu:BSU19630"/>
<dbReference type="PATRIC" id="fig|224308.179.peg.2146"/>
<dbReference type="eggNOG" id="COG0813">
    <property type="taxonomic scope" value="Bacteria"/>
</dbReference>
<dbReference type="InParanoid" id="O34925"/>
<dbReference type="OrthoDB" id="9782889at2"/>
<dbReference type="PhylomeDB" id="O34925"/>
<dbReference type="BioCyc" id="BSUB:BSU19630-MONOMER"/>
<dbReference type="BRENDA" id="2.4.2.1">
    <property type="organism ID" value="658"/>
</dbReference>
<dbReference type="SABIO-RK" id="O34925"/>
<dbReference type="EvolutionaryTrace" id="O34925"/>
<dbReference type="Proteomes" id="UP000001570">
    <property type="component" value="Chromosome"/>
</dbReference>
<dbReference type="GO" id="GO:0005829">
    <property type="term" value="C:cytosol"/>
    <property type="evidence" value="ECO:0000318"/>
    <property type="project" value="GO_Central"/>
</dbReference>
<dbReference type="GO" id="GO:0004731">
    <property type="term" value="F:purine-nucleoside phosphorylase activity"/>
    <property type="evidence" value="ECO:0000318"/>
    <property type="project" value="GO_Central"/>
</dbReference>
<dbReference type="GO" id="GO:0006152">
    <property type="term" value="P:purine nucleoside catabolic process"/>
    <property type="evidence" value="ECO:0000318"/>
    <property type="project" value="GO_Central"/>
</dbReference>
<dbReference type="CDD" id="cd09006">
    <property type="entry name" value="PNP_EcPNPI-like"/>
    <property type="match status" value="1"/>
</dbReference>
<dbReference type="Gene3D" id="3.40.50.1580">
    <property type="entry name" value="Nucleoside phosphorylase domain"/>
    <property type="match status" value="1"/>
</dbReference>
<dbReference type="HAMAP" id="MF_01627">
    <property type="entry name" value="Pur_nucleosid_phosp"/>
    <property type="match status" value="1"/>
</dbReference>
<dbReference type="InterPro" id="IPR004402">
    <property type="entry name" value="DeoD-type"/>
</dbReference>
<dbReference type="InterPro" id="IPR018016">
    <property type="entry name" value="Nucleoside_phosphorylase_CS"/>
</dbReference>
<dbReference type="InterPro" id="IPR000845">
    <property type="entry name" value="Nucleoside_phosphorylase_d"/>
</dbReference>
<dbReference type="InterPro" id="IPR035994">
    <property type="entry name" value="Nucleoside_phosphorylase_sf"/>
</dbReference>
<dbReference type="NCBIfam" id="TIGR00107">
    <property type="entry name" value="deoD"/>
    <property type="match status" value="1"/>
</dbReference>
<dbReference type="NCBIfam" id="NF004489">
    <property type="entry name" value="PRK05819.1"/>
    <property type="match status" value="1"/>
</dbReference>
<dbReference type="NCBIfam" id="NF009914">
    <property type="entry name" value="PRK13374.1"/>
    <property type="match status" value="1"/>
</dbReference>
<dbReference type="PANTHER" id="PTHR43691:SF11">
    <property type="entry name" value="FI09636P-RELATED"/>
    <property type="match status" value="1"/>
</dbReference>
<dbReference type="PANTHER" id="PTHR43691">
    <property type="entry name" value="URIDINE PHOSPHORYLASE"/>
    <property type="match status" value="1"/>
</dbReference>
<dbReference type="Pfam" id="PF01048">
    <property type="entry name" value="PNP_UDP_1"/>
    <property type="match status" value="1"/>
</dbReference>
<dbReference type="SUPFAM" id="SSF53167">
    <property type="entry name" value="Purine and uridine phosphorylases"/>
    <property type="match status" value="1"/>
</dbReference>
<dbReference type="PROSITE" id="PS01232">
    <property type="entry name" value="PNP_UDP_1"/>
    <property type="match status" value="1"/>
</dbReference>
<keyword id="KW-0002">3D-structure</keyword>
<keyword id="KW-0328">Glycosyltransferase</keyword>
<keyword id="KW-1185">Reference proteome</keyword>
<keyword id="KW-0808">Transferase</keyword>
<gene>
    <name evidence="2" type="primary">deoD</name>
    <name type="synonym">punB</name>
    <name type="ordered locus">BSU19630</name>
</gene>
<evidence type="ECO:0000250" key="1">
    <source>
        <dbReference type="UniProtKB" id="P50389"/>
    </source>
</evidence>
<evidence type="ECO:0000255" key="2">
    <source>
        <dbReference type="HAMAP-Rule" id="MF_01627"/>
    </source>
</evidence>
<evidence type="ECO:0000305" key="3"/>
<evidence type="ECO:0007829" key="4">
    <source>
        <dbReference type="PDB" id="4D8V"/>
    </source>
</evidence>
<evidence type="ECO:0007829" key="5">
    <source>
        <dbReference type="PDB" id="4D8Y"/>
    </source>
</evidence>
<evidence type="ECO:0007829" key="6">
    <source>
        <dbReference type="PDB" id="4DA0"/>
    </source>
</evidence>
<protein>
    <recommendedName>
        <fullName evidence="2">Purine nucleoside phosphorylase DeoD-type</fullName>
        <shortName evidence="2">PNP</shortName>
        <ecNumber evidence="2">2.4.2.1</ecNumber>
    </recommendedName>
    <alternativeName>
        <fullName>Purine nucleoside phosphorylase II</fullName>
        <shortName>PU-NPase II</shortName>
    </alternativeName>
</protein>
<proteinExistence type="evidence at protein level"/>
<accession>O34925</accession>
<organism>
    <name type="scientific">Bacillus subtilis (strain 168)</name>
    <dbReference type="NCBI Taxonomy" id="224308"/>
    <lineage>
        <taxon>Bacteria</taxon>
        <taxon>Bacillati</taxon>
        <taxon>Bacillota</taxon>
        <taxon>Bacilli</taxon>
        <taxon>Bacillales</taxon>
        <taxon>Bacillaceae</taxon>
        <taxon>Bacillus</taxon>
    </lineage>
</organism>
<feature type="chain" id="PRO_0000063121" description="Purine nucleoside phosphorylase DeoD-type">
    <location>
        <begin position="1"/>
        <end position="233"/>
    </location>
</feature>
<feature type="active site" description="Proton donor" evidence="2">
    <location>
        <position position="203"/>
    </location>
</feature>
<feature type="binding site" evidence="1">
    <location>
        <position position="4"/>
    </location>
    <ligand>
        <name>a purine D-ribonucleoside</name>
        <dbReference type="ChEBI" id="CHEBI:142355"/>
        <note>ligand shared between dimeric partners</note>
    </ligand>
</feature>
<feature type="binding site" description="in other chain" evidence="1">
    <location>
        <position position="20"/>
    </location>
    <ligand>
        <name>phosphate</name>
        <dbReference type="ChEBI" id="CHEBI:43474"/>
        <note>ligand shared between dimeric partners</note>
    </ligand>
</feature>
<feature type="binding site" description="in other chain" evidence="1">
    <location>
        <position position="24"/>
    </location>
    <ligand>
        <name>phosphate</name>
        <dbReference type="ChEBI" id="CHEBI:43474"/>
        <note>ligand shared between dimeric partners</note>
    </ligand>
</feature>
<feature type="binding site" evidence="1">
    <location>
        <position position="43"/>
    </location>
    <ligand>
        <name>phosphate</name>
        <dbReference type="ChEBI" id="CHEBI:43474"/>
        <note>ligand shared between dimeric partners</note>
    </ligand>
</feature>
<feature type="binding site" description="in other chain" evidence="1">
    <location>
        <begin position="87"/>
        <end position="90"/>
    </location>
    <ligand>
        <name>phosphate</name>
        <dbReference type="ChEBI" id="CHEBI:43474"/>
        <note>ligand shared between dimeric partners</note>
    </ligand>
</feature>
<feature type="binding site" description="in other chain" evidence="1">
    <location>
        <begin position="178"/>
        <end position="180"/>
    </location>
    <ligand>
        <name>a purine D-ribonucleoside</name>
        <dbReference type="ChEBI" id="CHEBI:142355"/>
        <note>ligand shared between dimeric partners</note>
    </ligand>
</feature>
<feature type="binding site" description="in other chain" evidence="1">
    <location>
        <begin position="202"/>
        <end position="203"/>
    </location>
    <ligand>
        <name>a purine D-ribonucleoside</name>
        <dbReference type="ChEBI" id="CHEBI:142355"/>
        <note>ligand shared between dimeric partners</note>
    </ligand>
</feature>
<feature type="site" description="Important for catalytic activity" evidence="2">
    <location>
        <position position="216"/>
    </location>
</feature>
<feature type="helix" evidence="5">
    <location>
        <begin position="9"/>
        <end position="11"/>
    </location>
</feature>
<feature type="strand" evidence="5">
    <location>
        <begin position="14"/>
        <end position="18"/>
    </location>
</feature>
<feature type="helix" evidence="5">
    <location>
        <begin position="22"/>
        <end position="32"/>
    </location>
</feature>
<feature type="strand" evidence="5">
    <location>
        <begin position="34"/>
        <end position="40"/>
    </location>
</feature>
<feature type="helix" evidence="5">
    <location>
        <begin position="42"/>
        <end position="44"/>
    </location>
</feature>
<feature type="strand" evidence="5">
    <location>
        <begin position="47"/>
        <end position="52"/>
    </location>
</feature>
<feature type="strand" evidence="5">
    <location>
        <begin position="55"/>
        <end position="60"/>
    </location>
</feature>
<feature type="helix" evidence="5">
    <location>
        <begin position="66"/>
        <end position="80"/>
    </location>
</feature>
<feature type="strand" evidence="5">
    <location>
        <begin position="84"/>
        <end position="93"/>
    </location>
</feature>
<feature type="strand" evidence="6">
    <location>
        <begin position="95"/>
        <end position="98"/>
    </location>
</feature>
<feature type="strand" evidence="5">
    <location>
        <begin position="103"/>
        <end position="112"/>
    </location>
</feature>
<feature type="helix" evidence="5">
    <location>
        <begin position="115"/>
        <end position="120"/>
    </location>
</feature>
<feature type="helix" evidence="5">
    <location>
        <begin position="131"/>
        <end position="144"/>
    </location>
</feature>
<feature type="strand" evidence="5">
    <location>
        <begin position="148"/>
        <end position="155"/>
    </location>
</feature>
<feature type="helix" evidence="5">
    <location>
        <begin position="166"/>
        <end position="171"/>
    </location>
</feature>
<feature type="strand" evidence="5">
    <location>
        <begin position="176"/>
        <end position="180"/>
    </location>
</feature>
<feature type="helix" evidence="5">
    <location>
        <begin position="181"/>
        <end position="190"/>
    </location>
</feature>
<feature type="strand" evidence="5">
    <location>
        <begin position="194"/>
        <end position="204"/>
    </location>
</feature>
<feature type="turn" evidence="5">
    <location>
        <begin position="205"/>
        <end position="207"/>
    </location>
</feature>
<feature type="helix" evidence="5">
    <location>
        <begin position="213"/>
        <end position="227"/>
    </location>
</feature>
<feature type="turn" evidence="4">
    <location>
        <begin position="228"/>
        <end position="230"/>
    </location>
</feature>
<comment type="function">
    <text evidence="2">Catalyzes the reversible phosphorolytic breakdown of the N-glycosidic bond in the beta-(deoxy)ribonucleoside molecules, with the formation of the corresponding free purine bases and pentose-1-phosphate.</text>
</comment>
<comment type="catalytic activity">
    <reaction evidence="2">
        <text>a purine D-ribonucleoside + phosphate = a purine nucleobase + alpha-D-ribose 1-phosphate</text>
        <dbReference type="Rhea" id="RHEA:19805"/>
        <dbReference type="ChEBI" id="CHEBI:26386"/>
        <dbReference type="ChEBI" id="CHEBI:43474"/>
        <dbReference type="ChEBI" id="CHEBI:57720"/>
        <dbReference type="ChEBI" id="CHEBI:142355"/>
        <dbReference type="EC" id="2.4.2.1"/>
    </reaction>
</comment>
<comment type="catalytic activity">
    <reaction evidence="2">
        <text>a purine 2'-deoxy-D-ribonucleoside + phosphate = a purine nucleobase + 2-deoxy-alpha-D-ribose 1-phosphate</text>
        <dbReference type="Rhea" id="RHEA:36431"/>
        <dbReference type="ChEBI" id="CHEBI:26386"/>
        <dbReference type="ChEBI" id="CHEBI:43474"/>
        <dbReference type="ChEBI" id="CHEBI:57259"/>
        <dbReference type="ChEBI" id="CHEBI:142361"/>
        <dbReference type="EC" id="2.4.2.1"/>
    </reaction>
</comment>
<comment type="subunit">
    <text evidence="2">Homohexamer; trimer of homodimers.</text>
</comment>
<comment type="similarity">
    <text evidence="2 3">Belongs to the PNP/UDP phosphorylase family.</text>
</comment>
<name>DEOD_BACSU</name>